<gene>
    <name type="primary">COB</name>
    <name type="synonym">CYTB</name>
</gene>
<accession>Q9ZZ40</accession>
<comment type="function">
    <text evidence="3">Component of the ubiquinol-cytochrome c reductase complex (complex III or cytochrome b-c1 complex) that is part of the mitochondrial respiratory chain. The b-c1 complex mediates electron transfer from ubiquinol to cytochrome c. Contributes to the generation of a proton gradient across the mitochondrial membrane that is then used for ATP synthesis.</text>
</comment>
<comment type="cofactor">
    <cofactor evidence="3">
        <name>heme b</name>
        <dbReference type="ChEBI" id="CHEBI:60344"/>
    </cofactor>
    <text evidence="3">Binds 2 heme b groups non-covalently.</text>
</comment>
<comment type="subunit">
    <text evidence="3">Fungal cytochrome b-c1 complex contains 10 subunits; 3 respiratory subunits, 2 core proteins and 5 low-molecular weight proteins. Cytochrome b-c1 complex is a homodimer.</text>
</comment>
<comment type="subcellular location">
    <subcellularLocation>
        <location evidence="3">Mitochondrion inner membrane</location>
        <topology evidence="3">Multi-pass membrane protein</topology>
    </subcellularLocation>
</comment>
<comment type="miscellaneous">
    <text evidence="1">Heme 1 (or BL or b562) is low-potential and absorbs at about 562 nm, and heme 2 (or BH or b566) is high-potential and absorbs at about 566 nm.</text>
</comment>
<comment type="similarity">
    <text evidence="4 5">Belongs to the cytochrome b family.</text>
</comment>
<comment type="caution">
    <text evidence="3">The protein contains only eight transmembrane helices, not nine as predicted by bioinformatics tools.</text>
</comment>
<keyword id="KW-0249">Electron transport</keyword>
<keyword id="KW-0349">Heme</keyword>
<keyword id="KW-0408">Iron</keyword>
<keyword id="KW-0472">Membrane</keyword>
<keyword id="KW-0479">Metal-binding</keyword>
<keyword id="KW-0496">Mitochondrion</keyword>
<keyword id="KW-0999">Mitochondrion inner membrane</keyword>
<keyword id="KW-0679">Respiratory chain</keyword>
<keyword id="KW-0812">Transmembrane</keyword>
<keyword id="KW-1133">Transmembrane helix</keyword>
<keyword id="KW-0813">Transport</keyword>
<keyword id="KW-0830">Ubiquinone</keyword>
<feature type="chain" id="PRO_0000061766" description="Cytochrome b">
    <location>
        <begin position="1"/>
        <end position="386"/>
    </location>
</feature>
<feature type="transmembrane region" description="Helical" evidence="3">
    <location>
        <begin position="32"/>
        <end position="52"/>
    </location>
</feature>
<feature type="transmembrane region" description="Helical" evidence="3">
    <location>
        <begin position="76"/>
        <end position="98"/>
    </location>
</feature>
<feature type="transmembrane region" description="Helical" evidence="3">
    <location>
        <begin position="113"/>
        <end position="133"/>
    </location>
</feature>
<feature type="transmembrane region" description="Helical" evidence="3">
    <location>
        <begin position="179"/>
        <end position="199"/>
    </location>
</feature>
<feature type="transmembrane region" description="Helical" evidence="3">
    <location>
        <begin position="226"/>
        <end position="246"/>
    </location>
</feature>
<feature type="transmembrane region" description="Helical" evidence="3">
    <location>
        <begin position="290"/>
        <end position="310"/>
    </location>
</feature>
<feature type="transmembrane region" description="Helical" evidence="3">
    <location>
        <begin position="322"/>
        <end position="342"/>
    </location>
</feature>
<feature type="transmembrane region" description="Helical" evidence="3">
    <location>
        <begin position="349"/>
        <end position="369"/>
    </location>
</feature>
<feature type="binding site" description="axial binding residue" evidence="5">
    <location>
        <position position="82"/>
    </location>
    <ligand>
        <name>heme b</name>
        <dbReference type="ChEBI" id="CHEBI:60344"/>
        <label>b562</label>
    </ligand>
    <ligandPart>
        <name>Fe</name>
        <dbReference type="ChEBI" id="CHEBI:18248"/>
    </ligandPart>
</feature>
<feature type="binding site" description="axial binding residue" evidence="5">
    <location>
        <position position="96"/>
    </location>
    <ligand>
        <name>heme b</name>
        <dbReference type="ChEBI" id="CHEBI:60344"/>
        <label>b566</label>
    </ligand>
    <ligandPart>
        <name>Fe</name>
        <dbReference type="ChEBI" id="CHEBI:18248"/>
    </ligandPart>
</feature>
<feature type="binding site" description="axial binding residue" evidence="5">
    <location>
        <position position="183"/>
    </location>
    <ligand>
        <name>heme b</name>
        <dbReference type="ChEBI" id="CHEBI:60344"/>
        <label>b562</label>
    </ligand>
    <ligandPart>
        <name>Fe</name>
        <dbReference type="ChEBI" id="CHEBI:18248"/>
    </ligandPart>
</feature>
<feature type="binding site" description="axial binding residue" evidence="5">
    <location>
        <position position="197"/>
    </location>
    <ligand>
        <name>heme b</name>
        <dbReference type="ChEBI" id="CHEBI:60344"/>
        <label>b566</label>
    </ligand>
    <ligandPart>
        <name>Fe</name>
        <dbReference type="ChEBI" id="CHEBI:18248"/>
    </ligandPart>
</feature>
<feature type="binding site" evidence="2">
    <location>
        <position position="202"/>
    </location>
    <ligand>
        <name>a ubiquinone</name>
        <dbReference type="ChEBI" id="CHEBI:16389"/>
    </ligand>
</feature>
<reference key="1">
    <citation type="journal article" date="1999" name="Curr. Genet.">
        <title>Organisation of the mitochondrial genome of Trichophyton rubrum III. DNA sequence analysis of the NADH dehydrogenase subunits 1, 2, 3, 4, 5 and the cytochrome b gene.</title>
        <authorList>
            <person name="de Bievre C."/>
            <person name="Dujon B."/>
        </authorList>
    </citation>
    <scope>NUCLEOTIDE SEQUENCE [GENOMIC DNA]</scope>
    <source>
        <strain>IP 1817.89</strain>
    </source>
</reference>
<name>CYB_TRIRU</name>
<sequence>MRIFKSHRLLKLVNSYIIDSPQPTNLSYLWNFGSLLALCLGIQIVTGVTLAMHYSPSITDALYSIEHIMRDVNNGWLIRYLHANTASAFFFLVYLHMGRGIYYGSYQGSRSLTWNIGVVIFIVMIVTAFLGYVLPFGQMSLWGATVITNLLSAIPWINQDLVEFIWGGFSVNNATLNRFFSLHYLLPFILAALVLMHLIALHDTVGSSNPLGISGNYDRLPFAPYFLFKDLVTIFLFMLGLSIFVLFMPNALGDCENYVMANPMQTPAAIVPEWYLLPFYAILRSIPDKTLGVVAMLGAILILMALPYLDKSNIRGMQFKPLSKIAFYIFIANFLVLMILGAKHVEDPFIIFGQISTTLYFSYFIIITPLFSIFDNILFDIATKKK</sequence>
<evidence type="ECO:0000250" key="1"/>
<evidence type="ECO:0000250" key="2">
    <source>
        <dbReference type="UniProtKB" id="P00157"/>
    </source>
</evidence>
<evidence type="ECO:0000250" key="3">
    <source>
        <dbReference type="UniProtKB" id="P00163"/>
    </source>
</evidence>
<evidence type="ECO:0000255" key="4">
    <source>
        <dbReference type="PROSITE-ProRule" id="PRU00967"/>
    </source>
</evidence>
<evidence type="ECO:0000255" key="5">
    <source>
        <dbReference type="PROSITE-ProRule" id="PRU00968"/>
    </source>
</evidence>
<proteinExistence type="inferred from homology"/>
<protein>
    <recommendedName>
        <fullName>Cytochrome b</fullName>
    </recommendedName>
    <alternativeName>
        <fullName>Complex III subunit 3</fullName>
    </alternativeName>
    <alternativeName>
        <fullName>Complex III subunit III</fullName>
    </alternativeName>
    <alternativeName>
        <fullName>Cytochrome b-c1 complex subunit 3</fullName>
    </alternativeName>
    <alternativeName>
        <fullName>Ubiquinol-cytochrome-c reductase complex cytochrome b subunit</fullName>
    </alternativeName>
</protein>
<dbReference type="EMBL" id="Y18476">
    <property type="protein sequence ID" value="CAA77187.1"/>
    <property type="molecule type" value="Genomic_DNA"/>
</dbReference>
<dbReference type="PIR" id="T14243">
    <property type="entry name" value="T14243"/>
</dbReference>
<dbReference type="SMR" id="Q9ZZ40"/>
<dbReference type="GO" id="GO:0005743">
    <property type="term" value="C:mitochondrial inner membrane"/>
    <property type="evidence" value="ECO:0007669"/>
    <property type="project" value="UniProtKB-SubCell"/>
</dbReference>
<dbReference type="GO" id="GO:0045275">
    <property type="term" value="C:respiratory chain complex III"/>
    <property type="evidence" value="ECO:0007669"/>
    <property type="project" value="InterPro"/>
</dbReference>
<dbReference type="GO" id="GO:0046872">
    <property type="term" value="F:metal ion binding"/>
    <property type="evidence" value="ECO:0007669"/>
    <property type="project" value="UniProtKB-KW"/>
</dbReference>
<dbReference type="GO" id="GO:0008121">
    <property type="term" value="F:ubiquinol-cytochrome-c reductase activity"/>
    <property type="evidence" value="ECO:0007669"/>
    <property type="project" value="InterPro"/>
</dbReference>
<dbReference type="GO" id="GO:0006122">
    <property type="term" value="P:mitochondrial electron transport, ubiquinol to cytochrome c"/>
    <property type="evidence" value="ECO:0007669"/>
    <property type="project" value="TreeGrafter"/>
</dbReference>
<dbReference type="CDD" id="cd00290">
    <property type="entry name" value="cytochrome_b_C"/>
    <property type="match status" value="1"/>
</dbReference>
<dbReference type="CDD" id="cd00284">
    <property type="entry name" value="Cytochrome_b_N"/>
    <property type="match status" value="1"/>
</dbReference>
<dbReference type="FunFam" id="1.20.810.10:FF:000002">
    <property type="entry name" value="Cytochrome b"/>
    <property type="match status" value="1"/>
</dbReference>
<dbReference type="Gene3D" id="1.20.810.10">
    <property type="entry name" value="Cytochrome Bc1 Complex, Chain C"/>
    <property type="match status" value="1"/>
</dbReference>
<dbReference type="InterPro" id="IPR005798">
    <property type="entry name" value="Cyt_b/b6_C"/>
</dbReference>
<dbReference type="InterPro" id="IPR036150">
    <property type="entry name" value="Cyt_b/b6_C_sf"/>
</dbReference>
<dbReference type="InterPro" id="IPR005797">
    <property type="entry name" value="Cyt_b/b6_N"/>
</dbReference>
<dbReference type="InterPro" id="IPR027387">
    <property type="entry name" value="Cytb/b6-like_sf"/>
</dbReference>
<dbReference type="InterPro" id="IPR030689">
    <property type="entry name" value="Cytochrome_b"/>
</dbReference>
<dbReference type="InterPro" id="IPR048260">
    <property type="entry name" value="Cytochrome_b_C_euk/bac"/>
</dbReference>
<dbReference type="InterPro" id="IPR048259">
    <property type="entry name" value="Cytochrome_b_N_euk/bac"/>
</dbReference>
<dbReference type="InterPro" id="IPR016174">
    <property type="entry name" value="Di-haem_cyt_TM"/>
</dbReference>
<dbReference type="PANTHER" id="PTHR19271">
    <property type="entry name" value="CYTOCHROME B"/>
    <property type="match status" value="1"/>
</dbReference>
<dbReference type="PANTHER" id="PTHR19271:SF16">
    <property type="entry name" value="CYTOCHROME B"/>
    <property type="match status" value="1"/>
</dbReference>
<dbReference type="Pfam" id="PF00032">
    <property type="entry name" value="Cytochrom_B_C"/>
    <property type="match status" value="1"/>
</dbReference>
<dbReference type="Pfam" id="PF00033">
    <property type="entry name" value="Cytochrome_B"/>
    <property type="match status" value="1"/>
</dbReference>
<dbReference type="PIRSF" id="PIRSF038885">
    <property type="entry name" value="COB"/>
    <property type="match status" value="1"/>
</dbReference>
<dbReference type="SUPFAM" id="SSF81648">
    <property type="entry name" value="a domain/subunit of cytochrome bc1 complex (Ubiquinol-cytochrome c reductase)"/>
    <property type="match status" value="1"/>
</dbReference>
<dbReference type="SUPFAM" id="SSF81342">
    <property type="entry name" value="Transmembrane di-heme cytochromes"/>
    <property type="match status" value="1"/>
</dbReference>
<dbReference type="PROSITE" id="PS51003">
    <property type="entry name" value="CYTB_CTER"/>
    <property type="match status" value="1"/>
</dbReference>
<dbReference type="PROSITE" id="PS51002">
    <property type="entry name" value="CYTB_NTER"/>
    <property type="match status" value="1"/>
</dbReference>
<organism>
    <name type="scientific">Trichophyton rubrum</name>
    <name type="common">Athlete's foot fungus</name>
    <name type="synonym">Epidermophyton rubrum</name>
    <dbReference type="NCBI Taxonomy" id="5551"/>
    <lineage>
        <taxon>Eukaryota</taxon>
        <taxon>Fungi</taxon>
        <taxon>Dikarya</taxon>
        <taxon>Ascomycota</taxon>
        <taxon>Pezizomycotina</taxon>
        <taxon>Eurotiomycetes</taxon>
        <taxon>Eurotiomycetidae</taxon>
        <taxon>Onygenales</taxon>
        <taxon>Arthrodermataceae</taxon>
        <taxon>Trichophyton</taxon>
    </lineage>
</organism>
<geneLocation type="mitochondrion"/>